<name>GP180_MOUSE</name>
<dbReference type="EMBL" id="AB041545">
    <property type="protein sequence ID" value="BAA95030.1"/>
    <property type="molecule type" value="mRNA"/>
</dbReference>
<dbReference type="EMBL" id="AK053422">
    <property type="protein sequence ID" value="BAC35382.1"/>
    <property type="molecule type" value="mRNA"/>
</dbReference>
<dbReference type="EMBL" id="AK169908">
    <property type="protein sequence ID" value="BAE41450.1"/>
    <property type="molecule type" value="mRNA"/>
</dbReference>
<dbReference type="EMBL" id="BC069981">
    <property type="protein sequence ID" value="AAH69981.1"/>
    <property type="molecule type" value="mRNA"/>
</dbReference>
<dbReference type="CCDS" id="CCDS27333.1"/>
<dbReference type="RefSeq" id="NP_067409.2">
    <property type="nucleotide sequence ID" value="NM_021434.5"/>
</dbReference>
<dbReference type="PDB" id="9FOW">
    <property type="method" value="X-ray"/>
    <property type="resolution" value="1.88 A"/>
    <property type="chains" value="A/B/C=24-162"/>
</dbReference>
<dbReference type="PDBsum" id="9FOW"/>
<dbReference type="SMR" id="Q8BPS4"/>
<dbReference type="FunCoup" id="Q8BPS4">
    <property type="interactions" value="1981"/>
</dbReference>
<dbReference type="STRING" id="10090.ENSMUSP00000022728"/>
<dbReference type="GlyCosmos" id="Q8BPS4">
    <property type="glycosylation" value="1 site, No reported glycans"/>
</dbReference>
<dbReference type="GlyGen" id="Q8BPS4">
    <property type="glycosylation" value="1 site, 1 N-linked glycan (1 site)"/>
</dbReference>
<dbReference type="iPTMnet" id="Q8BPS4"/>
<dbReference type="PhosphoSitePlus" id="Q8BPS4"/>
<dbReference type="SwissPalm" id="Q8BPS4"/>
<dbReference type="PaxDb" id="10090-ENSMUSP00000022728"/>
<dbReference type="PeptideAtlas" id="Q8BPS4"/>
<dbReference type="ProteomicsDB" id="267750"/>
<dbReference type="Pumba" id="Q8BPS4"/>
<dbReference type="Antibodypedia" id="53993">
    <property type="antibodies" value="180 antibodies from 28 providers"/>
</dbReference>
<dbReference type="DNASU" id="58245"/>
<dbReference type="Ensembl" id="ENSMUST00000022728.4">
    <property type="protein sequence ID" value="ENSMUSP00000022728.3"/>
    <property type="gene ID" value="ENSMUSG00000022131.4"/>
</dbReference>
<dbReference type="GeneID" id="58245"/>
<dbReference type="KEGG" id="mmu:58245"/>
<dbReference type="UCSC" id="uc007uyq.2">
    <property type="organism name" value="mouse"/>
</dbReference>
<dbReference type="AGR" id="MGI:1930949"/>
<dbReference type="CTD" id="160897"/>
<dbReference type="MGI" id="MGI:1930949">
    <property type="gene designation" value="Gpr180"/>
</dbReference>
<dbReference type="VEuPathDB" id="HostDB:ENSMUSG00000022131"/>
<dbReference type="eggNOG" id="KOG4290">
    <property type="taxonomic scope" value="Eukaryota"/>
</dbReference>
<dbReference type="GeneTree" id="ENSGT00940000153981"/>
<dbReference type="HOGENOM" id="CLU_040652_0_0_1"/>
<dbReference type="InParanoid" id="Q8BPS4"/>
<dbReference type="OMA" id="DHSCTEK"/>
<dbReference type="OrthoDB" id="45670at2759"/>
<dbReference type="PhylomeDB" id="Q8BPS4"/>
<dbReference type="TreeFam" id="TF314975"/>
<dbReference type="BioGRID-ORCS" id="58245">
    <property type="hits" value="1 hit in 78 CRISPR screens"/>
</dbReference>
<dbReference type="ChiTaRS" id="Gpr180">
    <property type="organism name" value="mouse"/>
</dbReference>
<dbReference type="PRO" id="PR:Q8BPS4"/>
<dbReference type="Proteomes" id="UP000000589">
    <property type="component" value="Chromosome 14"/>
</dbReference>
<dbReference type="RNAct" id="Q8BPS4">
    <property type="molecule type" value="protein"/>
</dbReference>
<dbReference type="Bgee" id="ENSMUSG00000022131">
    <property type="expression patterns" value="Expressed in humerus cartilage element and 245 other cell types or tissues"/>
</dbReference>
<dbReference type="GO" id="GO:0016020">
    <property type="term" value="C:membrane"/>
    <property type="evidence" value="ECO:0007669"/>
    <property type="project" value="UniProtKB-SubCell"/>
</dbReference>
<dbReference type="GO" id="GO:0045444">
    <property type="term" value="P:fat cell differentiation"/>
    <property type="evidence" value="ECO:0000315"/>
    <property type="project" value="MGI"/>
</dbReference>
<dbReference type="GO" id="GO:0007186">
    <property type="term" value="P:G protein-coupled receptor signaling pathway"/>
    <property type="evidence" value="ECO:0007669"/>
    <property type="project" value="InterPro"/>
</dbReference>
<dbReference type="GO" id="GO:0010467">
    <property type="term" value="P:gene expression"/>
    <property type="evidence" value="ECO:0000315"/>
    <property type="project" value="MGI"/>
</dbReference>
<dbReference type="GO" id="GO:0006091">
    <property type="term" value="P:generation of precursor metabolites and energy"/>
    <property type="evidence" value="ECO:0000315"/>
    <property type="project" value="MGI"/>
</dbReference>
<dbReference type="GO" id="GO:0006629">
    <property type="term" value="P:lipid metabolic process"/>
    <property type="evidence" value="ECO:0000315"/>
    <property type="project" value="MGI"/>
</dbReference>
<dbReference type="GO" id="GO:0032094">
    <property type="term" value="P:response to food"/>
    <property type="evidence" value="ECO:0000315"/>
    <property type="project" value="MGI"/>
</dbReference>
<dbReference type="GO" id="GO:0019236">
    <property type="term" value="P:response to pheromone"/>
    <property type="evidence" value="ECO:0007669"/>
    <property type="project" value="InterPro"/>
</dbReference>
<dbReference type="InterPro" id="IPR053880">
    <property type="entry name" value="GPR180-like_N"/>
</dbReference>
<dbReference type="InterPro" id="IPR047831">
    <property type="entry name" value="GPR180/TMEM145"/>
</dbReference>
<dbReference type="InterPro" id="IPR019336">
    <property type="entry name" value="GPR180/TMEM145_TM"/>
</dbReference>
<dbReference type="PANTHER" id="PTHR23252:SF29">
    <property type="entry name" value="INTEGRAL MEMBRANE PROTEIN GPR180"/>
    <property type="match status" value="1"/>
</dbReference>
<dbReference type="PANTHER" id="PTHR23252">
    <property type="entry name" value="INTIMAL THICKNESS RECEPTOR-RELATED"/>
    <property type="match status" value="1"/>
</dbReference>
<dbReference type="Pfam" id="PF21870">
    <property type="entry name" value="GP180_GOLD"/>
    <property type="match status" value="1"/>
</dbReference>
<dbReference type="Pfam" id="PF10192">
    <property type="entry name" value="GPR180-TMEM145_TM"/>
    <property type="match status" value="1"/>
</dbReference>
<evidence type="ECO:0000255" key="1"/>
<evidence type="ECO:0000305" key="2"/>
<evidence type="ECO:0007829" key="3">
    <source>
        <dbReference type="PDB" id="9FOW"/>
    </source>
</evidence>
<reference key="1">
    <citation type="submission" date="2000-04" db="EMBL/GenBank/DDBJ databases">
        <title>Isolation of full-length cDNA clones from mouse brain cDNA library made by oligo-capping method.</title>
        <authorList>
            <person name="Osada N."/>
            <person name="Kusuda J."/>
            <person name="Tanuma R."/>
            <person name="Ito A."/>
            <person name="Hirata M."/>
            <person name="Sugano S."/>
            <person name="Hashimoto K."/>
        </authorList>
    </citation>
    <scope>NUCLEOTIDE SEQUENCE [LARGE SCALE MRNA]</scope>
    <source>
        <strain>C57BL/6J</strain>
        <tissue>Brain</tissue>
    </source>
</reference>
<reference key="2">
    <citation type="journal article" date="2005" name="Science">
        <title>The transcriptional landscape of the mammalian genome.</title>
        <authorList>
            <person name="Carninci P."/>
            <person name="Kasukawa T."/>
            <person name="Katayama S."/>
            <person name="Gough J."/>
            <person name="Frith M.C."/>
            <person name="Maeda N."/>
            <person name="Oyama R."/>
            <person name="Ravasi T."/>
            <person name="Lenhard B."/>
            <person name="Wells C."/>
            <person name="Kodzius R."/>
            <person name="Shimokawa K."/>
            <person name="Bajic V.B."/>
            <person name="Brenner S.E."/>
            <person name="Batalov S."/>
            <person name="Forrest A.R."/>
            <person name="Zavolan M."/>
            <person name="Davis M.J."/>
            <person name="Wilming L.G."/>
            <person name="Aidinis V."/>
            <person name="Allen J.E."/>
            <person name="Ambesi-Impiombato A."/>
            <person name="Apweiler R."/>
            <person name="Aturaliya R.N."/>
            <person name="Bailey T.L."/>
            <person name="Bansal M."/>
            <person name="Baxter L."/>
            <person name="Beisel K.W."/>
            <person name="Bersano T."/>
            <person name="Bono H."/>
            <person name="Chalk A.M."/>
            <person name="Chiu K.P."/>
            <person name="Choudhary V."/>
            <person name="Christoffels A."/>
            <person name="Clutterbuck D.R."/>
            <person name="Crowe M.L."/>
            <person name="Dalla E."/>
            <person name="Dalrymple B.P."/>
            <person name="de Bono B."/>
            <person name="Della Gatta G."/>
            <person name="di Bernardo D."/>
            <person name="Down T."/>
            <person name="Engstrom P."/>
            <person name="Fagiolini M."/>
            <person name="Faulkner G."/>
            <person name="Fletcher C.F."/>
            <person name="Fukushima T."/>
            <person name="Furuno M."/>
            <person name="Futaki S."/>
            <person name="Gariboldi M."/>
            <person name="Georgii-Hemming P."/>
            <person name="Gingeras T.R."/>
            <person name="Gojobori T."/>
            <person name="Green R.E."/>
            <person name="Gustincich S."/>
            <person name="Harbers M."/>
            <person name="Hayashi Y."/>
            <person name="Hensch T.K."/>
            <person name="Hirokawa N."/>
            <person name="Hill D."/>
            <person name="Huminiecki L."/>
            <person name="Iacono M."/>
            <person name="Ikeo K."/>
            <person name="Iwama A."/>
            <person name="Ishikawa T."/>
            <person name="Jakt M."/>
            <person name="Kanapin A."/>
            <person name="Katoh M."/>
            <person name="Kawasawa Y."/>
            <person name="Kelso J."/>
            <person name="Kitamura H."/>
            <person name="Kitano H."/>
            <person name="Kollias G."/>
            <person name="Krishnan S.P."/>
            <person name="Kruger A."/>
            <person name="Kummerfeld S.K."/>
            <person name="Kurochkin I.V."/>
            <person name="Lareau L.F."/>
            <person name="Lazarevic D."/>
            <person name="Lipovich L."/>
            <person name="Liu J."/>
            <person name="Liuni S."/>
            <person name="McWilliam S."/>
            <person name="Madan Babu M."/>
            <person name="Madera M."/>
            <person name="Marchionni L."/>
            <person name="Matsuda H."/>
            <person name="Matsuzawa S."/>
            <person name="Miki H."/>
            <person name="Mignone F."/>
            <person name="Miyake S."/>
            <person name="Morris K."/>
            <person name="Mottagui-Tabar S."/>
            <person name="Mulder N."/>
            <person name="Nakano N."/>
            <person name="Nakauchi H."/>
            <person name="Ng P."/>
            <person name="Nilsson R."/>
            <person name="Nishiguchi S."/>
            <person name="Nishikawa S."/>
            <person name="Nori F."/>
            <person name="Ohara O."/>
            <person name="Okazaki Y."/>
            <person name="Orlando V."/>
            <person name="Pang K.C."/>
            <person name="Pavan W.J."/>
            <person name="Pavesi G."/>
            <person name="Pesole G."/>
            <person name="Petrovsky N."/>
            <person name="Piazza S."/>
            <person name="Reed J."/>
            <person name="Reid J.F."/>
            <person name="Ring B.Z."/>
            <person name="Ringwald M."/>
            <person name="Rost B."/>
            <person name="Ruan Y."/>
            <person name="Salzberg S.L."/>
            <person name="Sandelin A."/>
            <person name="Schneider C."/>
            <person name="Schoenbach C."/>
            <person name="Sekiguchi K."/>
            <person name="Semple C.A."/>
            <person name="Seno S."/>
            <person name="Sessa L."/>
            <person name="Sheng Y."/>
            <person name="Shibata Y."/>
            <person name="Shimada H."/>
            <person name="Shimada K."/>
            <person name="Silva D."/>
            <person name="Sinclair B."/>
            <person name="Sperling S."/>
            <person name="Stupka E."/>
            <person name="Sugiura K."/>
            <person name="Sultana R."/>
            <person name="Takenaka Y."/>
            <person name="Taki K."/>
            <person name="Tammoja K."/>
            <person name="Tan S.L."/>
            <person name="Tang S."/>
            <person name="Taylor M.S."/>
            <person name="Tegner J."/>
            <person name="Teichmann S.A."/>
            <person name="Ueda H.R."/>
            <person name="van Nimwegen E."/>
            <person name="Verardo R."/>
            <person name="Wei C.L."/>
            <person name="Yagi K."/>
            <person name="Yamanishi H."/>
            <person name="Zabarovsky E."/>
            <person name="Zhu S."/>
            <person name="Zimmer A."/>
            <person name="Hide W."/>
            <person name="Bult C."/>
            <person name="Grimmond S.M."/>
            <person name="Teasdale R.D."/>
            <person name="Liu E.T."/>
            <person name="Brusic V."/>
            <person name="Quackenbush J."/>
            <person name="Wahlestedt C."/>
            <person name="Mattick J.S."/>
            <person name="Hume D.A."/>
            <person name="Kai C."/>
            <person name="Sasaki D."/>
            <person name="Tomaru Y."/>
            <person name="Fukuda S."/>
            <person name="Kanamori-Katayama M."/>
            <person name="Suzuki M."/>
            <person name="Aoki J."/>
            <person name="Arakawa T."/>
            <person name="Iida J."/>
            <person name="Imamura K."/>
            <person name="Itoh M."/>
            <person name="Kato T."/>
            <person name="Kawaji H."/>
            <person name="Kawagashira N."/>
            <person name="Kawashima T."/>
            <person name="Kojima M."/>
            <person name="Kondo S."/>
            <person name="Konno H."/>
            <person name="Nakano K."/>
            <person name="Ninomiya N."/>
            <person name="Nishio T."/>
            <person name="Okada M."/>
            <person name="Plessy C."/>
            <person name="Shibata K."/>
            <person name="Shiraki T."/>
            <person name="Suzuki S."/>
            <person name="Tagami M."/>
            <person name="Waki K."/>
            <person name="Watahiki A."/>
            <person name="Okamura-Oho Y."/>
            <person name="Suzuki H."/>
            <person name="Kawai J."/>
            <person name="Hayashizaki Y."/>
        </authorList>
    </citation>
    <scope>NUCLEOTIDE SEQUENCE [LARGE SCALE MRNA]</scope>
    <source>
        <strain>C57BL/6J</strain>
        <strain>NOD</strain>
        <tissue>Eye</tissue>
    </source>
</reference>
<reference key="3">
    <citation type="journal article" date="2004" name="Genome Res.">
        <title>The status, quality, and expansion of the NIH full-length cDNA project: the Mammalian Gene Collection (MGC).</title>
        <authorList>
            <consortium name="The MGC Project Team"/>
        </authorList>
    </citation>
    <scope>NUCLEOTIDE SEQUENCE [LARGE SCALE MRNA]</scope>
    <source>
        <tissue>Embryo</tissue>
    </source>
</reference>
<reference key="4">
    <citation type="journal article" date="2010" name="Cell">
        <title>A tissue-specific atlas of mouse protein phosphorylation and expression.</title>
        <authorList>
            <person name="Huttlin E.L."/>
            <person name="Jedrychowski M.P."/>
            <person name="Elias J.E."/>
            <person name="Goswami T."/>
            <person name="Rad R."/>
            <person name="Beausoleil S.A."/>
            <person name="Villen J."/>
            <person name="Haas W."/>
            <person name="Sowa M.E."/>
            <person name="Gygi S.P."/>
        </authorList>
    </citation>
    <scope>IDENTIFICATION BY MASS SPECTROMETRY [LARGE SCALE ANALYSIS]</scope>
    <source>
        <tissue>Kidney</tissue>
        <tissue>Liver</tissue>
        <tissue>Lung</tissue>
        <tissue>Pancreas</tissue>
        <tissue>Spleen</tissue>
        <tissue>Testis</tissue>
    </source>
</reference>
<gene>
    <name type="primary">Gpr180</name>
    <name type="ORF">MNCb-3029</name>
</gene>
<protein>
    <recommendedName>
        <fullName>Integral membrane protein GPR180</fullName>
    </recommendedName>
</protein>
<proteinExistence type="evidence at protein level"/>
<keyword id="KW-0002">3D-structure</keyword>
<keyword id="KW-0325">Glycoprotein</keyword>
<keyword id="KW-0472">Membrane</keyword>
<keyword id="KW-1185">Reference proteome</keyword>
<keyword id="KW-0732">Signal</keyword>
<keyword id="KW-0812">Transmembrane</keyword>
<keyword id="KW-1133">Transmembrane helix</keyword>
<comment type="subcellular location">
    <subcellularLocation>
        <location evidence="2">Membrane</location>
        <topology evidence="2">Multi-pass membrane protein</topology>
    </subcellularLocation>
</comment>
<feature type="signal peptide" evidence="1">
    <location>
        <begin position="1"/>
        <end position="23"/>
    </location>
</feature>
<feature type="chain" id="PRO_0000239663" description="Integral membrane protein GPR180">
    <location>
        <begin position="24"/>
        <end position="441"/>
    </location>
</feature>
<feature type="transmembrane region" description="Helical" evidence="1">
    <location>
        <begin position="174"/>
        <end position="194"/>
    </location>
</feature>
<feature type="transmembrane region" description="Helical" evidence="1">
    <location>
        <begin position="206"/>
        <end position="226"/>
    </location>
</feature>
<feature type="transmembrane region" description="Helical" evidence="1">
    <location>
        <begin position="250"/>
        <end position="270"/>
    </location>
</feature>
<feature type="transmembrane region" description="Helical" evidence="1">
    <location>
        <begin position="285"/>
        <end position="305"/>
    </location>
</feature>
<feature type="transmembrane region" description="Helical" evidence="1">
    <location>
        <begin position="322"/>
        <end position="342"/>
    </location>
</feature>
<feature type="transmembrane region" description="Helical" evidence="1">
    <location>
        <begin position="361"/>
        <end position="381"/>
    </location>
</feature>
<feature type="transmembrane region" description="Helical" evidence="1">
    <location>
        <begin position="390"/>
        <end position="410"/>
    </location>
</feature>
<feature type="glycosylation site" description="N-linked (GlcNAc...) asparagine" evidence="1">
    <location>
        <position position="111"/>
    </location>
</feature>
<feature type="sequence conflict" description="In Ref. 1; BAA95030." evidence="2" ref="1">
    <original>S</original>
    <variation>P</variation>
    <location>
        <position position="420"/>
    </location>
</feature>
<feature type="strand" evidence="3">
    <location>
        <begin position="24"/>
        <end position="30"/>
    </location>
</feature>
<feature type="helix" evidence="3">
    <location>
        <begin position="32"/>
        <end position="38"/>
    </location>
</feature>
<feature type="strand" evidence="3">
    <location>
        <begin position="40"/>
        <end position="46"/>
    </location>
</feature>
<feature type="strand" evidence="3">
    <location>
        <begin position="49"/>
        <end position="60"/>
    </location>
</feature>
<feature type="helix" evidence="3">
    <location>
        <begin position="62"/>
        <end position="68"/>
    </location>
</feature>
<feature type="strand" evidence="3">
    <location>
        <begin position="71"/>
        <end position="76"/>
    </location>
</feature>
<feature type="helix" evidence="3">
    <location>
        <begin position="77"/>
        <end position="85"/>
    </location>
</feature>
<feature type="strand" evidence="3">
    <location>
        <begin position="86"/>
        <end position="88"/>
    </location>
</feature>
<feature type="helix" evidence="3">
    <location>
        <begin position="92"/>
        <end position="96"/>
    </location>
</feature>
<feature type="strand" evidence="3">
    <location>
        <begin position="100"/>
        <end position="104"/>
    </location>
</feature>
<feature type="strand" evidence="3">
    <location>
        <begin position="107"/>
        <end position="115"/>
    </location>
</feature>
<feature type="strand" evidence="3">
    <location>
        <begin position="123"/>
        <end position="128"/>
    </location>
</feature>
<feature type="turn" evidence="3">
    <location>
        <begin position="130"/>
        <end position="133"/>
    </location>
</feature>
<feature type="strand" evidence="3">
    <location>
        <begin position="145"/>
        <end position="152"/>
    </location>
</feature>
<organism>
    <name type="scientific">Mus musculus</name>
    <name type="common">Mouse</name>
    <dbReference type="NCBI Taxonomy" id="10090"/>
    <lineage>
        <taxon>Eukaryota</taxon>
        <taxon>Metazoa</taxon>
        <taxon>Chordata</taxon>
        <taxon>Craniata</taxon>
        <taxon>Vertebrata</taxon>
        <taxon>Euteleostomi</taxon>
        <taxon>Mammalia</taxon>
        <taxon>Eutheria</taxon>
        <taxon>Euarchontoglires</taxon>
        <taxon>Glires</taxon>
        <taxon>Rodentia</taxon>
        <taxon>Myomorpha</taxon>
        <taxon>Muroidea</taxon>
        <taxon>Muridae</taxon>
        <taxon>Murinae</taxon>
        <taxon>Mus</taxon>
        <taxon>Mus</taxon>
    </lineage>
</organism>
<accession>Q8BPS4</accession>
<accession>Q9JJG1</accession>
<sequence>MGGLRLLAVALTCSCWWPQGGQGKTLRGSFSSAAARDAQGQSIGHFEFHGDHALLCVRINNVAVAVGKEAKLYLFQAQEWLKLLESSPGYSCSERLARAQLTVTVTQTEHNLTVSQLPAPQTWRVFYADKFTCRDDSESPQGEEIPFEMVLLNPDAEGNPLDHFSARESGLHEFFFLLVLVYFVTACIYAQSLWQAMKKGGPMHTILKVLTTALLLQAASALANYIHLSRYSRDGLGVPLIGSLAEVFDIASQIQMLYLLLSLCMGWTIVRMKKSQSRPLQWDSTPASTGIAVFIVITQSILLLWEQFEDTSHHSAHSHRSLAGLLLIVLRICLALSLGCGLYQVITVERSALKREFYITFAKGCILWFLCQPALACIAVAFNDYQRDKLITVGVILCQAVAMVILYRLFLSHSLYWEVSSLSSVTLPLTISSAHRGRPHF</sequence>